<evidence type="ECO:0000250" key="1"/>
<evidence type="ECO:0000250" key="2">
    <source>
        <dbReference type="UniProtKB" id="O22317"/>
    </source>
</evidence>
<evidence type="ECO:0000255" key="3"/>
<evidence type="ECO:0000256" key="4">
    <source>
        <dbReference type="SAM" id="MobiDB-lite"/>
    </source>
</evidence>
<evidence type="ECO:0000269" key="5">
    <source>
    </source>
</evidence>
<evidence type="ECO:0000269" key="6">
    <source>
    </source>
</evidence>
<evidence type="ECO:0000305" key="7"/>
<keyword id="KW-0134">Cell wall</keyword>
<keyword id="KW-0961">Cell wall biogenesis/degradation</keyword>
<keyword id="KW-0165">Cleavage on pair of basic residues</keyword>
<keyword id="KW-0903">Direct protein sequencing</keyword>
<keyword id="KW-0325">Glycoprotein</keyword>
<keyword id="KW-0326">Glycosidase</keyword>
<keyword id="KW-0378">Hydrolase</keyword>
<keyword id="KW-1185">Reference proteome</keyword>
<keyword id="KW-0964">Secreted</keyword>
<keyword id="KW-0732">Signal</keyword>
<dbReference type="EC" id="3.2.1.-"/>
<dbReference type="EMBL" id="Z49212">
    <property type="protein sequence ID" value="CAA89138.1"/>
    <property type="molecule type" value="Genomic_DNA"/>
</dbReference>
<dbReference type="EMBL" id="BK006946">
    <property type="protein sequence ID" value="DAA10206.1"/>
    <property type="molecule type" value="Genomic_DNA"/>
</dbReference>
<dbReference type="PIR" id="S53975">
    <property type="entry name" value="S53975"/>
</dbReference>
<dbReference type="RefSeq" id="NP_014035.1">
    <property type="nucleotide sequence ID" value="NM_001182815.1"/>
</dbReference>
<dbReference type="SMR" id="Q04951"/>
<dbReference type="BioGRID" id="35485">
    <property type="interactions" value="56"/>
</dbReference>
<dbReference type="DIP" id="DIP-3845N"/>
<dbReference type="FunCoup" id="Q04951">
    <property type="interactions" value="119"/>
</dbReference>
<dbReference type="IntAct" id="Q04951">
    <property type="interactions" value="1"/>
</dbReference>
<dbReference type="STRING" id="4932.YMR305C"/>
<dbReference type="CAZy" id="GH17">
    <property type="family name" value="Glycoside Hydrolase Family 17"/>
</dbReference>
<dbReference type="GlyCosmos" id="Q04951">
    <property type="glycosylation" value="1 site, No reported glycans"/>
</dbReference>
<dbReference type="GlyGen" id="Q04951">
    <property type="glycosylation" value="1 site"/>
</dbReference>
<dbReference type="iPTMnet" id="Q04951"/>
<dbReference type="PaxDb" id="4932-YMR305C"/>
<dbReference type="PeptideAtlas" id="Q04951"/>
<dbReference type="EnsemblFungi" id="YMR305C_mRNA">
    <property type="protein sequence ID" value="YMR305C"/>
    <property type="gene ID" value="YMR305C"/>
</dbReference>
<dbReference type="GeneID" id="855352"/>
<dbReference type="KEGG" id="sce:YMR305C"/>
<dbReference type="AGR" id="SGD:S000004921"/>
<dbReference type="SGD" id="S000004921">
    <property type="gene designation" value="SCW10"/>
</dbReference>
<dbReference type="VEuPathDB" id="FungiDB:YMR305C"/>
<dbReference type="eggNOG" id="ENOG502QTKT">
    <property type="taxonomic scope" value="Eukaryota"/>
</dbReference>
<dbReference type="GeneTree" id="ENSGT00940000176321"/>
<dbReference type="HOGENOM" id="CLU_027285_1_0_1"/>
<dbReference type="InParanoid" id="Q04951"/>
<dbReference type="OMA" id="KRTMITE"/>
<dbReference type="OrthoDB" id="941679at2759"/>
<dbReference type="BioCyc" id="YEAST:YMR305C-MONOMER"/>
<dbReference type="BioGRID-ORCS" id="855352">
    <property type="hits" value="4 hits in 10 CRISPR screens"/>
</dbReference>
<dbReference type="PRO" id="PR:Q04951"/>
<dbReference type="Proteomes" id="UP000002311">
    <property type="component" value="Chromosome XIII"/>
</dbReference>
<dbReference type="RNAct" id="Q04951">
    <property type="molecule type" value="protein"/>
</dbReference>
<dbReference type="GO" id="GO:0071944">
    <property type="term" value="C:cell periphery"/>
    <property type="evidence" value="ECO:0007005"/>
    <property type="project" value="SGD"/>
</dbReference>
<dbReference type="GO" id="GO:0009986">
    <property type="term" value="C:cell surface"/>
    <property type="evidence" value="ECO:0000318"/>
    <property type="project" value="GO_Central"/>
</dbReference>
<dbReference type="GO" id="GO:0005737">
    <property type="term" value="C:cytoplasm"/>
    <property type="evidence" value="ECO:0007005"/>
    <property type="project" value="SGD"/>
</dbReference>
<dbReference type="GO" id="GO:0005783">
    <property type="term" value="C:endoplasmic reticulum"/>
    <property type="evidence" value="ECO:0007005"/>
    <property type="project" value="SGD"/>
</dbReference>
<dbReference type="GO" id="GO:0005576">
    <property type="term" value="C:extracellular region"/>
    <property type="evidence" value="ECO:0000314"/>
    <property type="project" value="SGD"/>
</dbReference>
<dbReference type="GO" id="GO:0009277">
    <property type="term" value="C:fungal-type cell wall"/>
    <property type="evidence" value="ECO:0000314"/>
    <property type="project" value="SGD"/>
</dbReference>
<dbReference type="GO" id="GO:0042973">
    <property type="term" value="F:glucan endo-1,3-beta-D-glucosidase activity"/>
    <property type="evidence" value="ECO:0000318"/>
    <property type="project" value="GO_Central"/>
</dbReference>
<dbReference type="GO" id="GO:0015926">
    <property type="term" value="F:glucosidase activity"/>
    <property type="evidence" value="ECO:0000250"/>
    <property type="project" value="SGD"/>
</dbReference>
<dbReference type="GO" id="GO:0005975">
    <property type="term" value="P:carbohydrate metabolic process"/>
    <property type="evidence" value="ECO:0007669"/>
    <property type="project" value="InterPro"/>
</dbReference>
<dbReference type="GO" id="GO:0071555">
    <property type="term" value="P:cell wall organization"/>
    <property type="evidence" value="ECO:0000318"/>
    <property type="project" value="GO_Central"/>
</dbReference>
<dbReference type="GO" id="GO:0000747">
    <property type="term" value="P:conjugation with cellular fusion"/>
    <property type="evidence" value="ECO:0000316"/>
    <property type="project" value="SGD"/>
</dbReference>
<dbReference type="FunFam" id="3.20.20.80:FF:000111">
    <property type="entry name" value="Soluble cell wall protein"/>
    <property type="match status" value="1"/>
</dbReference>
<dbReference type="Gene3D" id="3.20.20.80">
    <property type="entry name" value="Glycosidases"/>
    <property type="match status" value="1"/>
</dbReference>
<dbReference type="InterPro" id="IPR050732">
    <property type="entry name" value="Beta-glucan_modifiers"/>
</dbReference>
<dbReference type="InterPro" id="IPR000490">
    <property type="entry name" value="Glyco_hydro_17"/>
</dbReference>
<dbReference type="InterPro" id="IPR017853">
    <property type="entry name" value="Glycoside_hydrolase_SF"/>
</dbReference>
<dbReference type="PANTHER" id="PTHR16631:SF14">
    <property type="entry name" value="FAMILY 17 GLUCOSIDASE SCW10-RELATED"/>
    <property type="match status" value="1"/>
</dbReference>
<dbReference type="PANTHER" id="PTHR16631">
    <property type="entry name" value="GLUCAN 1,3-BETA-GLUCOSIDASE"/>
    <property type="match status" value="1"/>
</dbReference>
<dbReference type="Pfam" id="PF00332">
    <property type="entry name" value="Glyco_hydro_17"/>
    <property type="match status" value="1"/>
</dbReference>
<dbReference type="SUPFAM" id="SSF51445">
    <property type="entry name" value="(Trans)glycosidases"/>
    <property type="match status" value="1"/>
</dbReference>
<dbReference type="PROSITE" id="PS00587">
    <property type="entry name" value="GLYCOSYL_HYDROL_F17"/>
    <property type="match status" value="1"/>
</dbReference>
<sequence length="389" mass="40469">MRFSNFLTVSALLTGALGAPAVRHKHEKRDVVTATVHAQVTVVVSGNSGETIVPVNENAVVATTSSTAVASQATTSTLEPTTSANVVTSQQQTSTLQSSEAASTVGSSTSSSPSSSSSTSSSASSSASSSISASGAKGITYSPYNDDGSCKSTAQVASDLEQLTGFDNIRLYGVDCSQVENVLQAKTSSQKLFLGIYYVDKIQDAVDTIKSAVESYGSWDDITTVSVGNELVNGGSATTTQVGEYVSTAKSALTSAGYTGSVVSVDTFIAVINNPDLCNYSDYMAVNAHAYFDENTAAQDAGPWVLEQIERVYTACGGKKDVVITETGWPSKGDTYGEAVPSKANQEAAISSIKSSCGSSAYLFTAFNDLWKDDGQYGVEKYWGILSSD</sequence>
<organism>
    <name type="scientific">Saccharomyces cerevisiae (strain ATCC 204508 / S288c)</name>
    <name type="common">Baker's yeast</name>
    <dbReference type="NCBI Taxonomy" id="559292"/>
    <lineage>
        <taxon>Eukaryota</taxon>
        <taxon>Fungi</taxon>
        <taxon>Dikarya</taxon>
        <taxon>Ascomycota</taxon>
        <taxon>Saccharomycotina</taxon>
        <taxon>Saccharomycetes</taxon>
        <taxon>Saccharomycetales</taxon>
        <taxon>Saccharomycetaceae</taxon>
        <taxon>Saccharomyces</taxon>
    </lineage>
</organism>
<protein>
    <recommendedName>
        <fullName>Probable family 17 glucosidase SCW10</fullName>
        <ecNumber>3.2.1.-</ecNumber>
    </recommendedName>
    <alternativeName>
        <fullName>Soluble cell wall protein 10</fullName>
    </alternativeName>
</protein>
<accession>Q04951</accession>
<accession>D6W0D2</accession>
<comment type="function">
    <text evidence="1">Glucanases possibly play a role in cell expansion during growth, in cell-cell fusion during mating, and in spore release during sporulation.</text>
</comment>
<comment type="subcellular location">
    <subcellularLocation>
        <location evidence="6">Secreted</location>
        <location evidence="6">Cell wall</location>
    </subcellularLocation>
</comment>
<comment type="PTM">
    <text>Glycosylated.</text>
</comment>
<comment type="miscellaneous">
    <text evidence="5">Present with 10500 molecules/cell in log phase SD medium.</text>
</comment>
<comment type="similarity">
    <text evidence="7">Belongs to the glycosyl hydrolase 17 family.</text>
</comment>
<name>SCW10_YEAST</name>
<proteinExistence type="evidence at protein level"/>
<feature type="signal peptide" evidence="3">
    <location>
        <begin position="1"/>
        <end position="18"/>
    </location>
</feature>
<feature type="propeptide" id="PRO_0000011901" evidence="6">
    <location>
        <begin position="19"/>
        <end position="29"/>
    </location>
</feature>
<feature type="chain" id="PRO_0000011902" description="Probable family 17 glucosidase SCW10">
    <location>
        <begin position="30"/>
        <end position="389"/>
    </location>
</feature>
<feature type="region of interest" description="Disordered" evidence="4">
    <location>
        <begin position="70"/>
        <end position="134"/>
    </location>
</feature>
<feature type="active site" description="Nucleophile" evidence="2">
    <location>
        <position position="326"/>
    </location>
</feature>
<feature type="glycosylation site" description="N-linked (GlcNAc...) asparagine" evidence="3">
    <location>
        <position position="279"/>
    </location>
</feature>
<feature type="sequence conflict" description="In Ref. 3; AA sequence." evidence="7" ref="3">
    <original>AQ</original>
    <variation>QE</variation>
    <location>
        <begin position="38"/>
        <end position="39"/>
    </location>
</feature>
<reference key="1">
    <citation type="journal article" date="1997" name="Nature">
        <title>The nucleotide sequence of Saccharomyces cerevisiae chromosome XIII.</title>
        <authorList>
            <person name="Bowman S."/>
            <person name="Churcher C.M."/>
            <person name="Badcock K."/>
            <person name="Brown D."/>
            <person name="Chillingworth T."/>
            <person name="Connor R."/>
            <person name="Dedman K."/>
            <person name="Devlin K."/>
            <person name="Gentles S."/>
            <person name="Hamlin N."/>
            <person name="Hunt S."/>
            <person name="Jagels K."/>
            <person name="Lye G."/>
            <person name="Moule S."/>
            <person name="Odell C."/>
            <person name="Pearson D."/>
            <person name="Rajandream M.A."/>
            <person name="Rice P."/>
            <person name="Skelton J."/>
            <person name="Walsh S.V."/>
            <person name="Whitehead S."/>
            <person name="Barrell B.G."/>
        </authorList>
    </citation>
    <scope>NUCLEOTIDE SEQUENCE [LARGE SCALE GENOMIC DNA]</scope>
    <source>
        <strain>ATCC 204508 / S288c</strain>
    </source>
</reference>
<reference key="2">
    <citation type="journal article" date="2014" name="G3 (Bethesda)">
        <title>The reference genome sequence of Saccharomyces cerevisiae: Then and now.</title>
        <authorList>
            <person name="Engel S.R."/>
            <person name="Dietrich F.S."/>
            <person name="Fisk D.G."/>
            <person name="Binkley G."/>
            <person name="Balakrishnan R."/>
            <person name="Costanzo M.C."/>
            <person name="Dwight S.S."/>
            <person name="Hitz B.C."/>
            <person name="Karra K."/>
            <person name="Nash R.S."/>
            <person name="Weng S."/>
            <person name="Wong E.D."/>
            <person name="Lloyd P."/>
            <person name="Skrzypek M.S."/>
            <person name="Miyasato S.R."/>
            <person name="Simison M."/>
            <person name="Cherry J.M."/>
        </authorList>
    </citation>
    <scope>GENOME REANNOTATION</scope>
    <source>
        <strain>ATCC 204508 / S288c</strain>
    </source>
</reference>
<reference key="3">
    <citation type="journal article" date="1998" name="J. Bacteriol.">
        <title>New potential cell wall glucanases of Saccharomyces cerevisiae and their involvement in mating.</title>
        <authorList>
            <person name="Cappellaro C."/>
            <person name="Mrsa V."/>
            <person name="Tanner W."/>
        </authorList>
    </citation>
    <scope>PROTEIN SEQUENCE OF 30-39</scope>
    <scope>SUBCELLULAR LOCATION</scope>
    <source>
        <strain>ATCC 96099 / S288c / SEY6210</strain>
    </source>
</reference>
<reference key="4">
    <citation type="journal article" date="2003" name="Nature">
        <title>Global analysis of protein expression in yeast.</title>
        <authorList>
            <person name="Ghaemmaghami S."/>
            <person name="Huh W.-K."/>
            <person name="Bower K."/>
            <person name="Howson R.W."/>
            <person name="Belle A."/>
            <person name="Dephoure N."/>
            <person name="O'Shea E.K."/>
            <person name="Weissman J.S."/>
        </authorList>
    </citation>
    <scope>LEVEL OF PROTEIN EXPRESSION [LARGE SCALE ANALYSIS]</scope>
</reference>
<gene>
    <name type="primary">SCW10</name>
    <name type="ordered locus">YMR305C</name>
    <name type="ORF">YM9952.07C</name>
</gene>